<comment type="function">
    <text evidence="1">DNA-dependent RNA polymerase catalyzes the transcription of DNA into RNA using the four ribonucleoside triphosphates as substrates.</text>
</comment>
<comment type="catalytic activity">
    <reaction evidence="1">
        <text>RNA(n) + a ribonucleoside 5'-triphosphate = RNA(n+1) + diphosphate</text>
        <dbReference type="Rhea" id="RHEA:21248"/>
        <dbReference type="Rhea" id="RHEA-COMP:14527"/>
        <dbReference type="Rhea" id="RHEA-COMP:17342"/>
        <dbReference type="ChEBI" id="CHEBI:33019"/>
        <dbReference type="ChEBI" id="CHEBI:61557"/>
        <dbReference type="ChEBI" id="CHEBI:140395"/>
        <dbReference type="EC" id="2.7.7.6"/>
    </reaction>
</comment>
<comment type="cofactor">
    <cofactor evidence="1">
        <name>Zn(2+)</name>
        <dbReference type="ChEBI" id="CHEBI:29105"/>
    </cofactor>
    <text evidence="1">Binds 1 Zn(2+) ion per subunit.</text>
</comment>
<comment type="subunit">
    <text evidence="1">In plastids the minimal PEP RNA polymerase catalytic core is composed of four subunits: alpha, beta, beta', and beta''. When a (nuclear-encoded) sigma factor is associated with the core the holoenzyme is formed, which can initiate transcription.</text>
</comment>
<comment type="subcellular location">
    <subcellularLocation>
        <location evidence="1">Plastid</location>
        <location evidence="1">Chloroplast</location>
    </subcellularLocation>
</comment>
<comment type="similarity">
    <text evidence="1">Belongs to the RNA polymerase beta' chain family. RpoC2 subfamily.</text>
</comment>
<accession>A6MMJ7</accession>
<sequence>MGVFMTERADLVFHNKVIDGTAMKRLISRLIDHFGMGYTSHILDQSKILGFQQATATSISLGIDDLLTIPSKEWLVQDTEQQRFILEKHYHYANVHAVEKLRQSIEIWYATSEYLRQEMNPNFRMTDPSNPVHLMSFSGARGNASQVHQLVGMRGLMSDPQGQMIDLPIQSNLREGLSLTEYIISCYGARKGVVDTAVRTSDAGYLTRRLVEVVQHIIVRRTDCGTIRSISVSPRKGMTEKIFVQTLIGRVLADDIYMGLRCIAVRKQEIGIGLANRLITFRARPIYIRTPFTCRSTSWICQLCYGRSPTHGDLVELGEAVGIIASQSIGEPGTQLTLRTFHTGGVFTGGTAEHVRAPSSGKIKFNEDLVHRTRTRHGHPAFLCSIGLYVTLEGRDIIHNLNIPPKGLILVQNGQYVESEQLIAEIRAGAFTLNFKERVRKHIYSESEGEMHWSTNVYHAPEYPYGNIHLLLKTSHLWILAGASRRSSIVSFSLHKDQDQMNVHSFSVEERYIYIFDLSMTNHRVKHKLLDTSGKKDREILEYSISDRIISNGHWNLISPSILQDNLDFLAKRRRNRFIIPLQYDQEREKELIPCFDISIEIPINGILRGNSILAYFDDPVYRRSSSGITKYGTLEVDSIVKKEDLIEYRGTKEFNQIQIKVDRFFFIPEEVHILPGSSSIMVRNNSLIGVHTRLTLNTRSKIGGLVRVERKKKSIELKIFSGNIHFPGETDKISRHSGILIPPGTGKKNFNQSKKELKNWIYVQRITPTKKKYFVSVRPVVTYEIADGINLATLFPQDLLQEKDNVQLRVVNYILYGNGKSIRGIYHTSSQLVRTCLVLNWDQEQNDSIEEVHTSFIEVRANDLIRDFIRIDLIKSTISYTGKRNDTGSSGLIPDNGLNSTNINPFYSKSKIQSLTQDQETIGMGTLLNRNKECQSLIILSSSNCSQIGPFNGSKYKNVTKESENIIPIMDFLGSLGTIVPKIANFYSSYHLITHNQILLKRFLLLDNSKQTFQVLKYGLIDENSRIYSPDPCSNIILNPFRLNWCFLRHNYCEETSTIISLGQFFCENICLFKYGPNINIKKSGQIIIVHVDSLVIRSAKPYLVTLGATVHGHYGKILYEGDRLVTFIYERSRSGDITQGLPKVEQVLEVRSIDSISMNLEKRVNSWNECISRILGRPWGFMIGSELTIAQSRISLVNRIQKVYRSQGVQIHNRHIEIIVRQVTSRVLVSEDGMSNVFSPGELIGLLRAERAGRALDEAICYRAILLGITRASLNTQSFISEASFQETTRVLAKAALRGRIDWLKGLKENVVLGGIIPVGTGFQKLVHRSRQDKNIHLEIKKNNLFDLEMRDILLHHRELFCSCIQDNLYETSEQSFTNS</sequence>
<dbReference type="EC" id="2.7.7.6" evidence="1"/>
<dbReference type="EMBL" id="EF380353">
    <property type="protein sequence ID" value="ABR01420.1"/>
    <property type="molecule type" value="Genomic_DNA"/>
</dbReference>
<dbReference type="RefSeq" id="YP_001294342.1">
    <property type="nucleotide sequence ID" value="NC_009601.1"/>
</dbReference>
<dbReference type="SMR" id="A6MMJ7"/>
<dbReference type="GeneID" id="5236619"/>
<dbReference type="GO" id="GO:0009507">
    <property type="term" value="C:chloroplast"/>
    <property type="evidence" value="ECO:0007669"/>
    <property type="project" value="UniProtKB-SubCell"/>
</dbReference>
<dbReference type="GO" id="GO:0000428">
    <property type="term" value="C:DNA-directed RNA polymerase complex"/>
    <property type="evidence" value="ECO:0007669"/>
    <property type="project" value="UniProtKB-KW"/>
</dbReference>
<dbReference type="GO" id="GO:0005739">
    <property type="term" value="C:mitochondrion"/>
    <property type="evidence" value="ECO:0007669"/>
    <property type="project" value="GOC"/>
</dbReference>
<dbReference type="GO" id="GO:0003677">
    <property type="term" value="F:DNA binding"/>
    <property type="evidence" value="ECO:0007669"/>
    <property type="project" value="UniProtKB-UniRule"/>
</dbReference>
<dbReference type="GO" id="GO:0003899">
    <property type="term" value="F:DNA-directed RNA polymerase activity"/>
    <property type="evidence" value="ECO:0007669"/>
    <property type="project" value="UniProtKB-UniRule"/>
</dbReference>
<dbReference type="GO" id="GO:0008270">
    <property type="term" value="F:zinc ion binding"/>
    <property type="evidence" value="ECO:0007669"/>
    <property type="project" value="UniProtKB-UniRule"/>
</dbReference>
<dbReference type="GO" id="GO:0006351">
    <property type="term" value="P:DNA-templated transcription"/>
    <property type="evidence" value="ECO:0007669"/>
    <property type="project" value="UniProtKB-UniRule"/>
</dbReference>
<dbReference type="CDD" id="cd02655">
    <property type="entry name" value="RNAP_beta'_C"/>
    <property type="match status" value="1"/>
</dbReference>
<dbReference type="FunFam" id="1.10.132.30:FF:000002">
    <property type="entry name" value="DNA-directed RNA polymerase subunit beta"/>
    <property type="match status" value="1"/>
</dbReference>
<dbReference type="Gene3D" id="1.10.132.30">
    <property type="match status" value="1"/>
</dbReference>
<dbReference type="Gene3D" id="1.10.150.390">
    <property type="match status" value="1"/>
</dbReference>
<dbReference type="Gene3D" id="1.10.1790.20">
    <property type="match status" value="1"/>
</dbReference>
<dbReference type="Gene3D" id="1.10.274.100">
    <property type="entry name" value="RNA polymerase Rpb1, domain 3"/>
    <property type="match status" value="1"/>
</dbReference>
<dbReference type="HAMAP" id="MF_01324">
    <property type="entry name" value="RNApol_bact_RpoC2"/>
    <property type="match status" value="1"/>
</dbReference>
<dbReference type="InterPro" id="IPR012756">
    <property type="entry name" value="DNA-dir_RpoC2_beta_pp"/>
</dbReference>
<dbReference type="InterPro" id="IPR050254">
    <property type="entry name" value="RNA_pol_beta''_euk"/>
</dbReference>
<dbReference type="InterPro" id="IPR042102">
    <property type="entry name" value="RNA_pol_Rpb1_3_sf"/>
</dbReference>
<dbReference type="InterPro" id="IPR007083">
    <property type="entry name" value="RNA_pol_Rpb1_4"/>
</dbReference>
<dbReference type="InterPro" id="IPR007081">
    <property type="entry name" value="RNA_pol_Rpb1_5"/>
</dbReference>
<dbReference type="InterPro" id="IPR038120">
    <property type="entry name" value="Rpb1_funnel_sf"/>
</dbReference>
<dbReference type="NCBIfam" id="TIGR02388">
    <property type="entry name" value="rpoC2_cyan"/>
    <property type="match status" value="1"/>
</dbReference>
<dbReference type="PANTHER" id="PTHR34995">
    <property type="entry name" value="DNA-DIRECTED RNA POLYMERASE SUBUNIT BETA"/>
    <property type="match status" value="1"/>
</dbReference>
<dbReference type="PANTHER" id="PTHR34995:SF1">
    <property type="entry name" value="DNA-DIRECTED RNA POLYMERASE SUBUNIT BETA"/>
    <property type="match status" value="1"/>
</dbReference>
<dbReference type="Pfam" id="PF05000">
    <property type="entry name" value="RNA_pol_Rpb1_4"/>
    <property type="match status" value="1"/>
</dbReference>
<dbReference type="Pfam" id="PF04998">
    <property type="entry name" value="RNA_pol_Rpb1_5"/>
    <property type="match status" value="2"/>
</dbReference>
<dbReference type="SUPFAM" id="SSF64484">
    <property type="entry name" value="beta and beta-prime subunits of DNA dependent RNA-polymerase"/>
    <property type="match status" value="1"/>
</dbReference>
<keyword id="KW-0150">Chloroplast</keyword>
<keyword id="KW-0240">DNA-directed RNA polymerase</keyword>
<keyword id="KW-0479">Metal-binding</keyword>
<keyword id="KW-0548">Nucleotidyltransferase</keyword>
<keyword id="KW-0934">Plastid</keyword>
<keyword id="KW-0804">Transcription</keyword>
<keyword id="KW-0808">Transferase</keyword>
<keyword id="KW-0862">Zinc</keyword>
<gene>
    <name evidence="1" type="primary">rpoC2</name>
</gene>
<proteinExistence type="inferred from homology"/>
<organism>
    <name type="scientific">Dioscorea elephantipes</name>
    <name type="common">Elephant's foot yam</name>
    <name type="synonym">Testudinaria elephantipes</name>
    <dbReference type="NCBI Taxonomy" id="145284"/>
    <lineage>
        <taxon>Eukaryota</taxon>
        <taxon>Viridiplantae</taxon>
        <taxon>Streptophyta</taxon>
        <taxon>Embryophyta</taxon>
        <taxon>Tracheophyta</taxon>
        <taxon>Spermatophyta</taxon>
        <taxon>Magnoliopsida</taxon>
        <taxon>Liliopsida</taxon>
        <taxon>Dioscoreales</taxon>
        <taxon>Dioscoreaceae</taxon>
        <taxon>Dioscorea</taxon>
    </lineage>
</organism>
<name>RPOC2_DIOEL</name>
<reference key="1">
    <citation type="journal article" date="2007" name="Mol. Phylogenet. Evol.">
        <title>Phylogenetic and evolutionary implications of complete chloroplast genome sequences of four early-diverging angiosperms: Buxus (Buxaceae), Chloranthus (Chloranthaceae), Dioscorea (Dioscoreaceae), and Illicium (Schisandraceae).</title>
        <authorList>
            <person name="Hansen D.R."/>
            <person name="Dastidar S.G."/>
            <person name="Cai Z."/>
            <person name="Penaflor C."/>
            <person name="Kuehl J.V."/>
            <person name="Boore J.L."/>
            <person name="Jansen R.K."/>
        </authorList>
    </citation>
    <scope>NUCLEOTIDE SEQUENCE [LARGE SCALE GENOMIC DNA]</scope>
</reference>
<feature type="chain" id="PRO_0000353559" description="DNA-directed RNA polymerase subunit beta''">
    <location>
        <begin position="1"/>
        <end position="1382"/>
    </location>
</feature>
<feature type="binding site" evidence="1">
    <location>
        <position position="224"/>
    </location>
    <ligand>
        <name>Zn(2+)</name>
        <dbReference type="ChEBI" id="CHEBI:29105"/>
    </ligand>
</feature>
<feature type="binding site" evidence="1">
    <location>
        <position position="294"/>
    </location>
    <ligand>
        <name>Zn(2+)</name>
        <dbReference type="ChEBI" id="CHEBI:29105"/>
    </ligand>
</feature>
<feature type="binding site" evidence="1">
    <location>
        <position position="301"/>
    </location>
    <ligand>
        <name>Zn(2+)</name>
        <dbReference type="ChEBI" id="CHEBI:29105"/>
    </ligand>
</feature>
<feature type="binding site" evidence="1">
    <location>
        <position position="304"/>
    </location>
    <ligand>
        <name>Zn(2+)</name>
        <dbReference type="ChEBI" id="CHEBI:29105"/>
    </ligand>
</feature>
<evidence type="ECO:0000255" key="1">
    <source>
        <dbReference type="HAMAP-Rule" id="MF_01324"/>
    </source>
</evidence>
<protein>
    <recommendedName>
        <fullName evidence="1">DNA-directed RNA polymerase subunit beta''</fullName>
        <ecNumber evidence="1">2.7.7.6</ecNumber>
    </recommendedName>
    <alternativeName>
        <fullName evidence="1">PEP</fullName>
    </alternativeName>
    <alternativeName>
        <fullName evidence="1">Plastid-encoded RNA polymerase subunit beta''</fullName>
        <shortName evidence="1">RNA polymerase subunit beta''</shortName>
    </alternativeName>
</protein>
<geneLocation type="chloroplast"/>